<dbReference type="EC" id="5.3.1.16" evidence="1"/>
<dbReference type="EMBL" id="CP000319">
    <property type="protein sequence ID" value="ABE61026.1"/>
    <property type="molecule type" value="Genomic_DNA"/>
</dbReference>
<dbReference type="SMR" id="Q1QRX1"/>
<dbReference type="STRING" id="323097.Nham_0125"/>
<dbReference type="KEGG" id="nha:Nham_0125"/>
<dbReference type="eggNOG" id="COG0106">
    <property type="taxonomic scope" value="Bacteria"/>
</dbReference>
<dbReference type="HOGENOM" id="CLU_048577_1_1_5"/>
<dbReference type="OrthoDB" id="9807749at2"/>
<dbReference type="UniPathway" id="UPA00031">
    <property type="reaction ID" value="UER00009"/>
</dbReference>
<dbReference type="Proteomes" id="UP000001953">
    <property type="component" value="Chromosome"/>
</dbReference>
<dbReference type="GO" id="GO:0005737">
    <property type="term" value="C:cytoplasm"/>
    <property type="evidence" value="ECO:0007669"/>
    <property type="project" value="UniProtKB-SubCell"/>
</dbReference>
<dbReference type="GO" id="GO:0003949">
    <property type="term" value="F:1-(5-phosphoribosyl)-5-[(5-phosphoribosylamino)methylideneamino]imidazole-4-carboxamide isomerase activity"/>
    <property type="evidence" value="ECO:0007669"/>
    <property type="project" value="UniProtKB-UniRule"/>
</dbReference>
<dbReference type="GO" id="GO:0000105">
    <property type="term" value="P:L-histidine biosynthetic process"/>
    <property type="evidence" value="ECO:0007669"/>
    <property type="project" value="UniProtKB-UniRule"/>
</dbReference>
<dbReference type="GO" id="GO:0000162">
    <property type="term" value="P:L-tryptophan biosynthetic process"/>
    <property type="evidence" value="ECO:0007669"/>
    <property type="project" value="TreeGrafter"/>
</dbReference>
<dbReference type="CDD" id="cd04732">
    <property type="entry name" value="HisA"/>
    <property type="match status" value="1"/>
</dbReference>
<dbReference type="FunFam" id="3.20.20.70:FF:000009">
    <property type="entry name" value="1-(5-phosphoribosyl)-5-[(5-phosphoribosylamino)methylideneamino] imidazole-4-carboxamide isomerase"/>
    <property type="match status" value="1"/>
</dbReference>
<dbReference type="Gene3D" id="3.20.20.70">
    <property type="entry name" value="Aldolase class I"/>
    <property type="match status" value="1"/>
</dbReference>
<dbReference type="HAMAP" id="MF_01014">
    <property type="entry name" value="HisA"/>
    <property type="match status" value="1"/>
</dbReference>
<dbReference type="InterPro" id="IPR013785">
    <property type="entry name" value="Aldolase_TIM"/>
</dbReference>
<dbReference type="InterPro" id="IPR006062">
    <property type="entry name" value="His_biosynth"/>
</dbReference>
<dbReference type="InterPro" id="IPR006063">
    <property type="entry name" value="HisA_bact_arch"/>
</dbReference>
<dbReference type="InterPro" id="IPR044524">
    <property type="entry name" value="Isoase_HisA-like"/>
</dbReference>
<dbReference type="InterPro" id="IPR023016">
    <property type="entry name" value="Isoase_HisA-like_bact"/>
</dbReference>
<dbReference type="InterPro" id="IPR011060">
    <property type="entry name" value="RibuloseP-bd_barrel"/>
</dbReference>
<dbReference type="NCBIfam" id="TIGR00007">
    <property type="entry name" value="1-(5-phosphoribosyl)-5-[(5-phosphoribosylamino)methylideneamino]imidazole-4-carboxamide isomerase"/>
    <property type="match status" value="1"/>
</dbReference>
<dbReference type="NCBIfam" id="NF010112">
    <property type="entry name" value="PRK13585.1"/>
    <property type="match status" value="1"/>
</dbReference>
<dbReference type="PANTHER" id="PTHR43090">
    <property type="entry name" value="1-(5-PHOSPHORIBOSYL)-5-[(5-PHOSPHORIBOSYLAMINO)METHYLIDENEAMINO] IMIDAZOLE-4-CARBOXAMIDE ISOMERASE"/>
    <property type="match status" value="1"/>
</dbReference>
<dbReference type="PANTHER" id="PTHR43090:SF2">
    <property type="entry name" value="1-(5-PHOSPHORIBOSYL)-5-[(5-PHOSPHORIBOSYLAMINO)METHYLIDENEAMINO] IMIDAZOLE-4-CARBOXAMIDE ISOMERASE"/>
    <property type="match status" value="1"/>
</dbReference>
<dbReference type="Pfam" id="PF00977">
    <property type="entry name" value="His_biosynth"/>
    <property type="match status" value="1"/>
</dbReference>
<dbReference type="SUPFAM" id="SSF51366">
    <property type="entry name" value="Ribulose-phoshate binding barrel"/>
    <property type="match status" value="1"/>
</dbReference>
<organism>
    <name type="scientific">Nitrobacter hamburgensis (strain DSM 10229 / NCIMB 13809 / X14)</name>
    <dbReference type="NCBI Taxonomy" id="323097"/>
    <lineage>
        <taxon>Bacteria</taxon>
        <taxon>Pseudomonadati</taxon>
        <taxon>Pseudomonadota</taxon>
        <taxon>Alphaproteobacteria</taxon>
        <taxon>Hyphomicrobiales</taxon>
        <taxon>Nitrobacteraceae</taxon>
        <taxon>Nitrobacter</taxon>
    </lineage>
</organism>
<gene>
    <name evidence="1" type="primary">hisA</name>
    <name type="ordered locus">Nham_0125</name>
</gene>
<comment type="catalytic activity">
    <reaction evidence="1">
        <text>1-(5-phospho-beta-D-ribosyl)-5-[(5-phospho-beta-D-ribosylamino)methylideneamino]imidazole-4-carboxamide = 5-[(5-phospho-1-deoxy-D-ribulos-1-ylimino)methylamino]-1-(5-phospho-beta-D-ribosyl)imidazole-4-carboxamide</text>
        <dbReference type="Rhea" id="RHEA:15469"/>
        <dbReference type="ChEBI" id="CHEBI:58435"/>
        <dbReference type="ChEBI" id="CHEBI:58525"/>
        <dbReference type="EC" id="5.3.1.16"/>
    </reaction>
</comment>
<comment type="pathway">
    <text evidence="1">Amino-acid biosynthesis; L-histidine biosynthesis; L-histidine from 5-phospho-alpha-D-ribose 1-diphosphate: step 4/9.</text>
</comment>
<comment type="subcellular location">
    <subcellularLocation>
        <location evidence="1">Cytoplasm</location>
    </subcellularLocation>
</comment>
<comment type="similarity">
    <text evidence="1">Belongs to the HisA/HisF family.</text>
</comment>
<feature type="chain" id="PRO_0000290499" description="1-(5-phosphoribosyl)-5-[(5-phosphoribosylamino)methylideneamino] imidazole-4-carboxamide isomerase">
    <location>
        <begin position="1"/>
        <end position="246"/>
    </location>
</feature>
<feature type="active site" description="Proton acceptor" evidence="1">
    <location>
        <position position="8"/>
    </location>
</feature>
<feature type="active site" description="Proton donor" evidence="1">
    <location>
        <position position="129"/>
    </location>
</feature>
<keyword id="KW-0028">Amino-acid biosynthesis</keyword>
<keyword id="KW-0963">Cytoplasm</keyword>
<keyword id="KW-0368">Histidine biosynthesis</keyword>
<keyword id="KW-0413">Isomerase</keyword>
<keyword id="KW-1185">Reference proteome</keyword>
<sequence length="246" mass="25801">MILFPAIDLKDGQCVRLEQGDMARATVFNFDPAEQARAFASQGFEYLHVVDLDGAFAGRPVNADAVERMLKNVAMPVQLGGGIRDLKTVEAWLKKGITRVIIGTAAVRDPVLVKEAAKAFPGRVAVGLDARDGKVAVEGWAETSEVTALDIARRFEDAGIAAIIFTDIARDGLLKGLNLDATIALADSISIPVIASGGFASIADVKALLAPRAKKLAGAIAGRALYDGRLDPAEALALIRAARAAA</sequence>
<protein>
    <recommendedName>
        <fullName evidence="1">1-(5-phosphoribosyl)-5-[(5-phosphoribosylamino)methylideneamino] imidazole-4-carboxamide isomerase</fullName>
        <ecNumber evidence="1">5.3.1.16</ecNumber>
    </recommendedName>
    <alternativeName>
        <fullName evidence="1">Phosphoribosylformimino-5-aminoimidazole carboxamide ribotide isomerase</fullName>
    </alternativeName>
</protein>
<name>HIS4_NITHX</name>
<reference key="1">
    <citation type="submission" date="2006-03" db="EMBL/GenBank/DDBJ databases">
        <title>Complete sequence of chromosome of Nitrobacter hamburgensis X14.</title>
        <authorList>
            <consortium name="US DOE Joint Genome Institute"/>
            <person name="Copeland A."/>
            <person name="Lucas S."/>
            <person name="Lapidus A."/>
            <person name="Barry K."/>
            <person name="Detter J.C."/>
            <person name="Glavina del Rio T."/>
            <person name="Hammon N."/>
            <person name="Israni S."/>
            <person name="Dalin E."/>
            <person name="Tice H."/>
            <person name="Pitluck S."/>
            <person name="Chain P."/>
            <person name="Malfatti S."/>
            <person name="Shin M."/>
            <person name="Vergez L."/>
            <person name="Schmutz J."/>
            <person name="Larimer F."/>
            <person name="Land M."/>
            <person name="Hauser L."/>
            <person name="Kyrpides N."/>
            <person name="Ivanova N."/>
            <person name="Ward B."/>
            <person name="Arp D."/>
            <person name="Klotz M."/>
            <person name="Stein L."/>
            <person name="O'Mullan G."/>
            <person name="Starkenburg S."/>
            <person name="Sayavedra L."/>
            <person name="Poret-Peterson A.T."/>
            <person name="Gentry M.E."/>
            <person name="Bruce D."/>
            <person name="Richardson P."/>
        </authorList>
    </citation>
    <scope>NUCLEOTIDE SEQUENCE [LARGE SCALE GENOMIC DNA]</scope>
    <source>
        <strain>DSM 10229 / NCIMB 13809 / X14</strain>
    </source>
</reference>
<evidence type="ECO:0000255" key="1">
    <source>
        <dbReference type="HAMAP-Rule" id="MF_01014"/>
    </source>
</evidence>
<accession>Q1QRX1</accession>
<proteinExistence type="inferred from homology"/>